<organism>
    <name type="scientific">Bartonella quintana (strain Toulouse)</name>
    <name type="common">Rochalimaea quintana</name>
    <dbReference type="NCBI Taxonomy" id="283165"/>
    <lineage>
        <taxon>Bacteria</taxon>
        <taxon>Pseudomonadati</taxon>
        <taxon>Pseudomonadota</taxon>
        <taxon>Alphaproteobacteria</taxon>
        <taxon>Hyphomicrobiales</taxon>
        <taxon>Bartonellaceae</taxon>
        <taxon>Bartonella</taxon>
    </lineage>
</organism>
<dbReference type="EC" id="7.1.1.-" evidence="1"/>
<dbReference type="EMBL" id="BX897700">
    <property type="protein sequence ID" value="CAF26059.1"/>
    <property type="molecule type" value="Genomic_DNA"/>
</dbReference>
<dbReference type="RefSeq" id="WP_011179329.1">
    <property type="nucleotide sequence ID" value="NC_005955.1"/>
</dbReference>
<dbReference type="SMR" id="Q6FZY8"/>
<dbReference type="KEGG" id="bqu:BQ05670"/>
<dbReference type="eggNOG" id="COG0649">
    <property type="taxonomic scope" value="Bacteria"/>
</dbReference>
<dbReference type="HOGENOM" id="CLU_015134_1_1_5"/>
<dbReference type="OrthoDB" id="9801496at2"/>
<dbReference type="Proteomes" id="UP000000597">
    <property type="component" value="Chromosome"/>
</dbReference>
<dbReference type="GO" id="GO:0005886">
    <property type="term" value="C:plasma membrane"/>
    <property type="evidence" value="ECO:0007669"/>
    <property type="project" value="UniProtKB-SubCell"/>
</dbReference>
<dbReference type="GO" id="GO:0051287">
    <property type="term" value="F:NAD binding"/>
    <property type="evidence" value="ECO:0007669"/>
    <property type="project" value="InterPro"/>
</dbReference>
<dbReference type="GO" id="GO:0050136">
    <property type="term" value="F:NADH:ubiquinone reductase (non-electrogenic) activity"/>
    <property type="evidence" value="ECO:0007669"/>
    <property type="project" value="UniProtKB-UniRule"/>
</dbReference>
<dbReference type="GO" id="GO:0048038">
    <property type="term" value="F:quinone binding"/>
    <property type="evidence" value="ECO:0007669"/>
    <property type="project" value="UniProtKB-KW"/>
</dbReference>
<dbReference type="FunFam" id="1.10.645.10:FF:000005">
    <property type="entry name" value="NADH-quinone oxidoreductase subunit D"/>
    <property type="match status" value="1"/>
</dbReference>
<dbReference type="Gene3D" id="1.10.645.10">
    <property type="entry name" value="Cytochrome-c3 Hydrogenase, chain B"/>
    <property type="match status" value="1"/>
</dbReference>
<dbReference type="HAMAP" id="MF_01358">
    <property type="entry name" value="NDH1_NuoD"/>
    <property type="match status" value="1"/>
</dbReference>
<dbReference type="InterPro" id="IPR001135">
    <property type="entry name" value="NADH_Q_OxRdtase_suD"/>
</dbReference>
<dbReference type="InterPro" id="IPR014029">
    <property type="entry name" value="NADH_UbQ_OxRdtase_49kDa_CS"/>
</dbReference>
<dbReference type="InterPro" id="IPR022885">
    <property type="entry name" value="NDH1_su_D/H"/>
</dbReference>
<dbReference type="InterPro" id="IPR029014">
    <property type="entry name" value="NiFe-Hase_large"/>
</dbReference>
<dbReference type="NCBIfam" id="TIGR01962">
    <property type="entry name" value="NuoD"/>
    <property type="match status" value="1"/>
</dbReference>
<dbReference type="NCBIfam" id="NF004739">
    <property type="entry name" value="PRK06075.1"/>
    <property type="match status" value="1"/>
</dbReference>
<dbReference type="PANTHER" id="PTHR11993:SF10">
    <property type="entry name" value="NADH DEHYDROGENASE [UBIQUINONE] IRON-SULFUR PROTEIN 2, MITOCHONDRIAL"/>
    <property type="match status" value="1"/>
</dbReference>
<dbReference type="PANTHER" id="PTHR11993">
    <property type="entry name" value="NADH-UBIQUINONE OXIDOREDUCTASE 49 KDA SUBUNIT"/>
    <property type="match status" value="1"/>
</dbReference>
<dbReference type="Pfam" id="PF00346">
    <property type="entry name" value="Complex1_49kDa"/>
    <property type="match status" value="1"/>
</dbReference>
<dbReference type="SUPFAM" id="SSF56762">
    <property type="entry name" value="HydB/Nqo4-like"/>
    <property type="match status" value="1"/>
</dbReference>
<dbReference type="PROSITE" id="PS00535">
    <property type="entry name" value="COMPLEX1_49K"/>
    <property type="match status" value="1"/>
</dbReference>
<evidence type="ECO:0000255" key="1">
    <source>
        <dbReference type="HAMAP-Rule" id="MF_01358"/>
    </source>
</evidence>
<accession>Q6FZY8</accession>
<proteinExistence type="inferred from homology"/>
<comment type="function">
    <text evidence="1">NDH-1 shuttles electrons from NADH, via FMN and iron-sulfur (Fe-S) centers, to quinones in the respiratory chain. The immediate electron acceptor for the enzyme in this species is believed to be ubiquinone. Couples the redox reaction to proton translocation (for every two electrons transferred, four hydrogen ions are translocated across the cytoplasmic membrane), and thus conserves the redox energy in a proton gradient.</text>
</comment>
<comment type="catalytic activity">
    <reaction evidence="1">
        <text>a quinone + NADH + 5 H(+)(in) = a quinol + NAD(+) + 4 H(+)(out)</text>
        <dbReference type="Rhea" id="RHEA:57888"/>
        <dbReference type="ChEBI" id="CHEBI:15378"/>
        <dbReference type="ChEBI" id="CHEBI:24646"/>
        <dbReference type="ChEBI" id="CHEBI:57540"/>
        <dbReference type="ChEBI" id="CHEBI:57945"/>
        <dbReference type="ChEBI" id="CHEBI:132124"/>
    </reaction>
</comment>
<comment type="subunit">
    <text evidence="1">NDH-1 is composed of 14 different subunits. Subunits NuoB, C, D, E, F, and G constitute the peripheral sector of the complex.</text>
</comment>
<comment type="subcellular location">
    <subcellularLocation>
        <location evidence="1">Cell inner membrane</location>
        <topology evidence="1">Peripheral membrane protein</topology>
        <orientation evidence="1">Cytoplasmic side</orientation>
    </subcellularLocation>
</comment>
<comment type="similarity">
    <text evidence="1">Belongs to the complex I 49 kDa subunit family.</text>
</comment>
<protein>
    <recommendedName>
        <fullName evidence="1">NADH-quinone oxidoreductase subunit D</fullName>
        <ecNumber evidence="1">7.1.1.-</ecNumber>
    </recommendedName>
    <alternativeName>
        <fullName evidence="1">NADH dehydrogenase I subunit D</fullName>
    </alternativeName>
    <alternativeName>
        <fullName evidence="1">NDH-1 subunit D</fullName>
    </alternativeName>
</protein>
<name>NUOD_BARQU</name>
<feature type="chain" id="PRO_0000357773" description="NADH-quinone oxidoreductase subunit D">
    <location>
        <begin position="1"/>
        <end position="396"/>
    </location>
</feature>
<sequence length="396" mass="44909">MAEVNVRNFNINFGPQHPAAHGVLRMVLELDGEVVERVDPHIGLLHRGTEKLMETKTYLQAVPYLDRLDYVAPMNQEHAFVLAIEKLLGVEVPKRGQLIRVLFSEIGRILNHLLNVTTQAMDVGALTPPLWGFEQRERLMIFYERACGARLHANYFRPGGVHQDLPESLIEDIGHFIDPFLISLSRLDALVTPNRIFKQRNVDIGVISIDEAWVRGFSGVMIRGAGVPWDLRKSQPYECYDEMEFDIPVGKNSDCYDRYLIRMEEMRQSARIMRQCVDRLLGSEKNGPVSSLNRKVVPPKRSEMKSSMEALIHHFKLYTEGFHTPPGEVYVAVEAPKGEFGVYLISDGTNKPYRVKLRAPGFAHLQAMDFLTRGHMLADATAILGSIDIVFGEVDR</sequence>
<keyword id="KW-0997">Cell inner membrane</keyword>
<keyword id="KW-1003">Cell membrane</keyword>
<keyword id="KW-0472">Membrane</keyword>
<keyword id="KW-0520">NAD</keyword>
<keyword id="KW-0874">Quinone</keyword>
<keyword id="KW-1278">Translocase</keyword>
<keyword id="KW-0813">Transport</keyword>
<keyword id="KW-0830">Ubiquinone</keyword>
<gene>
    <name evidence="1" type="primary">nuoD</name>
    <name type="ordered locus">BQ05670</name>
</gene>
<reference key="1">
    <citation type="journal article" date="2004" name="Proc. Natl. Acad. Sci. U.S.A.">
        <title>The louse-borne human pathogen Bartonella quintana is a genomic derivative of the zoonotic agent Bartonella henselae.</title>
        <authorList>
            <person name="Alsmark U.C.M."/>
            <person name="Frank A.C."/>
            <person name="Karlberg E.O."/>
            <person name="Legault B.-A."/>
            <person name="Ardell D.H."/>
            <person name="Canbaeck B."/>
            <person name="Eriksson A.-S."/>
            <person name="Naeslund A.K."/>
            <person name="Handley S.A."/>
            <person name="Huvet M."/>
            <person name="La Scola B."/>
            <person name="Holmberg M."/>
            <person name="Andersson S.G.E."/>
        </authorList>
    </citation>
    <scope>NUCLEOTIDE SEQUENCE [LARGE SCALE GENOMIC DNA]</scope>
    <source>
        <strain>Toulouse</strain>
    </source>
</reference>